<organism>
    <name type="scientific">Mycosarcoma maydis</name>
    <name type="common">Corn smut fungus</name>
    <name type="synonym">Ustilago maydis</name>
    <dbReference type="NCBI Taxonomy" id="5270"/>
    <lineage>
        <taxon>Eukaryota</taxon>
        <taxon>Fungi</taxon>
        <taxon>Dikarya</taxon>
        <taxon>Basidiomycota</taxon>
        <taxon>Ustilaginomycotina</taxon>
        <taxon>Ustilaginomycetes</taxon>
        <taxon>Ustilaginales</taxon>
        <taxon>Ustilaginaceae</taxon>
        <taxon>Mycosarcoma</taxon>
    </lineage>
</organism>
<keyword id="KW-0067">ATP-binding</keyword>
<keyword id="KW-1003">Cell membrane</keyword>
<keyword id="KW-0325">Glycoprotein</keyword>
<keyword id="KW-0472">Membrane</keyword>
<keyword id="KW-0547">Nucleotide-binding</keyword>
<keyword id="KW-1185">Reference proteome</keyword>
<keyword id="KW-0677">Repeat</keyword>
<keyword id="KW-0812">Transmembrane</keyword>
<keyword id="KW-1133">Transmembrane helix</keyword>
<keyword id="KW-0813">Transport</keyword>
<dbReference type="EMBL" id="CM003162">
    <property type="protein sequence ID" value="KIS65757.1"/>
    <property type="molecule type" value="Genomic_DNA"/>
</dbReference>
<dbReference type="RefSeq" id="XP_011392729.1">
    <property type="nucleotide sequence ID" value="XM_011394427.1"/>
</dbReference>
<dbReference type="SMR" id="A0A0D1BUH6"/>
<dbReference type="GlyCosmos" id="A0A0D1BUH6">
    <property type="glycosylation" value="7 sites, No reported glycans"/>
</dbReference>
<dbReference type="EnsemblFungi" id="KIS65757">
    <property type="protein sequence ID" value="KIS65757"/>
    <property type="gene ID" value="UMAG_06461"/>
</dbReference>
<dbReference type="GeneID" id="23566043"/>
<dbReference type="KEGG" id="uma:UMAG_06461"/>
<dbReference type="VEuPathDB" id="FungiDB:UMAG_06461"/>
<dbReference type="eggNOG" id="KOG0055">
    <property type="taxonomic scope" value="Eukaryota"/>
</dbReference>
<dbReference type="InParanoid" id="A0A0D1BUH6"/>
<dbReference type="OMA" id="CAYEICG"/>
<dbReference type="OrthoDB" id="6500128at2759"/>
<dbReference type="Proteomes" id="UP000000561">
    <property type="component" value="Chromosome 23"/>
</dbReference>
<dbReference type="GO" id="GO:0016020">
    <property type="term" value="C:membrane"/>
    <property type="evidence" value="ECO:0000318"/>
    <property type="project" value="GO_Central"/>
</dbReference>
<dbReference type="GO" id="GO:0005886">
    <property type="term" value="C:plasma membrane"/>
    <property type="evidence" value="ECO:0007669"/>
    <property type="project" value="UniProtKB-SubCell"/>
</dbReference>
<dbReference type="GO" id="GO:0140359">
    <property type="term" value="F:ABC-type transporter activity"/>
    <property type="evidence" value="ECO:0007669"/>
    <property type="project" value="InterPro"/>
</dbReference>
<dbReference type="GO" id="GO:0005524">
    <property type="term" value="F:ATP binding"/>
    <property type="evidence" value="ECO:0007669"/>
    <property type="project" value="UniProtKB-KW"/>
</dbReference>
<dbReference type="GO" id="GO:0016887">
    <property type="term" value="F:ATP hydrolysis activity"/>
    <property type="evidence" value="ECO:0007669"/>
    <property type="project" value="InterPro"/>
</dbReference>
<dbReference type="GO" id="GO:0042626">
    <property type="term" value="F:ATPase-coupled transmembrane transporter activity"/>
    <property type="evidence" value="ECO:0000318"/>
    <property type="project" value="GO_Central"/>
</dbReference>
<dbReference type="GO" id="GO:0055085">
    <property type="term" value="P:transmembrane transport"/>
    <property type="evidence" value="ECO:0000318"/>
    <property type="project" value="GO_Central"/>
</dbReference>
<dbReference type="CDD" id="cd18577">
    <property type="entry name" value="ABC_6TM_Pgp_ABCB1_D1_like"/>
    <property type="match status" value="1"/>
</dbReference>
<dbReference type="CDD" id="cd18578">
    <property type="entry name" value="ABC_6TM_Pgp_ABCB1_D2_like"/>
    <property type="match status" value="1"/>
</dbReference>
<dbReference type="CDD" id="cd03249">
    <property type="entry name" value="ABC_MTABC3_MDL1_MDL2"/>
    <property type="match status" value="1"/>
</dbReference>
<dbReference type="FunFam" id="3.40.50.300:FF:000967">
    <property type="entry name" value="ABC multidrug transporter mdr4"/>
    <property type="match status" value="2"/>
</dbReference>
<dbReference type="Gene3D" id="1.20.1560.10">
    <property type="entry name" value="ABC transporter type 1, transmembrane domain"/>
    <property type="match status" value="1"/>
</dbReference>
<dbReference type="Gene3D" id="3.40.50.300">
    <property type="entry name" value="P-loop containing nucleotide triphosphate hydrolases"/>
    <property type="match status" value="2"/>
</dbReference>
<dbReference type="InterPro" id="IPR003593">
    <property type="entry name" value="AAA+_ATPase"/>
</dbReference>
<dbReference type="InterPro" id="IPR011527">
    <property type="entry name" value="ABC1_TM_dom"/>
</dbReference>
<dbReference type="InterPro" id="IPR036640">
    <property type="entry name" value="ABC1_TM_sf"/>
</dbReference>
<dbReference type="InterPro" id="IPR003439">
    <property type="entry name" value="ABC_transporter-like_ATP-bd"/>
</dbReference>
<dbReference type="InterPro" id="IPR017871">
    <property type="entry name" value="ABC_transporter-like_CS"/>
</dbReference>
<dbReference type="InterPro" id="IPR027417">
    <property type="entry name" value="P-loop_NTPase"/>
</dbReference>
<dbReference type="InterPro" id="IPR039421">
    <property type="entry name" value="Type_1_exporter"/>
</dbReference>
<dbReference type="PANTHER" id="PTHR43394:SF11">
    <property type="entry name" value="ATP-BINDING CASSETTE TRANSPORTER"/>
    <property type="match status" value="1"/>
</dbReference>
<dbReference type="PANTHER" id="PTHR43394">
    <property type="entry name" value="ATP-DEPENDENT PERMEASE MDL1, MITOCHONDRIAL"/>
    <property type="match status" value="1"/>
</dbReference>
<dbReference type="Pfam" id="PF00664">
    <property type="entry name" value="ABC_membrane"/>
    <property type="match status" value="2"/>
</dbReference>
<dbReference type="Pfam" id="PF00005">
    <property type="entry name" value="ABC_tran"/>
    <property type="match status" value="2"/>
</dbReference>
<dbReference type="SMART" id="SM00382">
    <property type="entry name" value="AAA"/>
    <property type="match status" value="2"/>
</dbReference>
<dbReference type="SUPFAM" id="SSF90123">
    <property type="entry name" value="ABC transporter transmembrane region"/>
    <property type="match status" value="2"/>
</dbReference>
<dbReference type="SUPFAM" id="SSF52540">
    <property type="entry name" value="P-loop containing nucleoside triphosphate hydrolases"/>
    <property type="match status" value="2"/>
</dbReference>
<dbReference type="PROSITE" id="PS50929">
    <property type="entry name" value="ABC_TM1F"/>
    <property type="match status" value="2"/>
</dbReference>
<dbReference type="PROSITE" id="PS00211">
    <property type="entry name" value="ABC_TRANSPORTER_1"/>
    <property type="match status" value="2"/>
</dbReference>
<dbReference type="PROSITE" id="PS50893">
    <property type="entry name" value="ABC_TRANSPORTER_2"/>
    <property type="match status" value="2"/>
</dbReference>
<proteinExistence type="evidence at transcript level"/>
<evidence type="ECO:0000255" key="1"/>
<evidence type="ECO:0000255" key="2">
    <source>
        <dbReference type="PROSITE-ProRule" id="PRU00434"/>
    </source>
</evidence>
<evidence type="ECO:0000255" key="3">
    <source>
        <dbReference type="PROSITE-ProRule" id="PRU00441"/>
    </source>
</evidence>
<evidence type="ECO:0000255" key="4">
    <source>
        <dbReference type="PROSITE-ProRule" id="PRU00498"/>
    </source>
</evidence>
<evidence type="ECO:0000256" key="5">
    <source>
        <dbReference type="SAM" id="MobiDB-lite"/>
    </source>
</evidence>
<evidence type="ECO:0000269" key="6">
    <source>
    </source>
</evidence>
<evidence type="ECO:0000269" key="7">
    <source>
    </source>
</evidence>
<evidence type="ECO:0000303" key="8">
    <source>
    </source>
</evidence>
<evidence type="ECO:0000305" key="9"/>
<evidence type="ECO:0000305" key="10">
    <source>
    </source>
</evidence>
<reference key="1">
    <citation type="journal article" date="2006" name="Nature">
        <title>Insights from the genome of the biotrophic fungal plant pathogen Ustilago maydis.</title>
        <authorList>
            <person name="Kaemper J."/>
            <person name="Kahmann R."/>
            <person name="Boelker M."/>
            <person name="Ma L.-J."/>
            <person name="Brefort T."/>
            <person name="Saville B.J."/>
            <person name="Banuett F."/>
            <person name="Kronstad J.W."/>
            <person name="Gold S.E."/>
            <person name="Mueller O."/>
            <person name="Perlin M.H."/>
            <person name="Woesten H.A.B."/>
            <person name="de Vries R."/>
            <person name="Ruiz-Herrera J."/>
            <person name="Reynaga-Pena C.G."/>
            <person name="Snetselaar K."/>
            <person name="McCann M."/>
            <person name="Perez-Martin J."/>
            <person name="Feldbruegge M."/>
            <person name="Basse C.W."/>
            <person name="Steinberg G."/>
            <person name="Ibeas J.I."/>
            <person name="Holloman W."/>
            <person name="Guzman P."/>
            <person name="Farman M.L."/>
            <person name="Stajich J.E."/>
            <person name="Sentandreu R."/>
            <person name="Gonzalez-Prieto J.M."/>
            <person name="Kennell J.C."/>
            <person name="Molina L."/>
            <person name="Schirawski J."/>
            <person name="Mendoza-Mendoza A."/>
            <person name="Greilinger D."/>
            <person name="Muench K."/>
            <person name="Roessel N."/>
            <person name="Scherer M."/>
            <person name="Vranes M."/>
            <person name="Ladendorf O."/>
            <person name="Vincon V."/>
            <person name="Fuchs U."/>
            <person name="Sandrock B."/>
            <person name="Meng S."/>
            <person name="Ho E.C.H."/>
            <person name="Cahill M.J."/>
            <person name="Boyce K.J."/>
            <person name="Klose J."/>
            <person name="Klosterman S.J."/>
            <person name="Deelstra H.J."/>
            <person name="Ortiz-Castellanos L."/>
            <person name="Li W."/>
            <person name="Sanchez-Alonso P."/>
            <person name="Schreier P.H."/>
            <person name="Haeuser-Hahn I."/>
            <person name="Vaupel M."/>
            <person name="Koopmann E."/>
            <person name="Friedrich G."/>
            <person name="Voss H."/>
            <person name="Schlueter T."/>
            <person name="Margolis J."/>
            <person name="Platt D."/>
            <person name="Swimmer C."/>
            <person name="Gnirke A."/>
            <person name="Chen F."/>
            <person name="Vysotskaia V."/>
            <person name="Mannhaupt G."/>
            <person name="Gueldener U."/>
            <person name="Muensterkoetter M."/>
            <person name="Haase D."/>
            <person name="Oesterheld M."/>
            <person name="Mewes H.-W."/>
            <person name="Mauceli E.W."/>
            <person name="DeCaprio D."/>
            <person name="Wade C.M."/>
            <person name="Butler J."/>
            <person name="Young S.K."/>
            <person name="Jaffe D.B."/>
            <person name="Calvo S.E."/>
            <person name="Nusbaum C."/>
            <person name="Galagan J.E."/>
            <person name="Birren B.W."/>
        </authorList>
    </citation>
    <scope>NUCLEOTIDE SEQUENCE [LARGE SCALE GENOMIC DNA]</scope>
    <source>
        <strain>DSM 14603 / FGSC 9021 / UM521</strain>
    </source>
</reference>
<reference key="2">
    <citation type="submission" date="2014-09" db="EMBL/GenBank/DDBJ databases">
        <authorList>
            <person name="Gueldener U."/>
            <person name="Muensterkoetter M."/>
            <person name="Walter M.C."/>
            <person name="Mannhaupt G."/>
            <person name="Kahmann R."/>
        </authorList>
    </citation>
    <scope>GENOME REANNOTATION</scope>
    <source>
        <strain>DSM 14603 / FGSC 9021 / UM521</strain>
    </source>
</reference>
<reference key="3">
    <citation type="journal article" date="2007" name="Mol. Microbiol.">
        <title>A biosynthetic gene cluster for a secreted cellobiose lipid with antifungal activity from Ustilago maydis.</title>
        <authorList>
            <person name="Teichmann B."/>
            <person name="Linne U."/>
            <person name="Hewald S."/>
            <person name="Marahiel M.A."/>
            <person name="Boelker M."/>
        </authorList>
    </citation>
    <scope>FUNCTION</scope>
    <scope>INDUCTION</scope>
</reference>
<reference key="4">
    <citation type="journal article" date="2010" name="Appl. Environ. Microbiol.">
        <title>Activation of the ustilagic acid biosynthesis gene cluster in Ustilago maydis by the C2H2 zinc finger transcription factor Rua1.</title>
        <authorList>
            <person name="Teichmann B."/>
            <person name="Liu L."/>
            <person name="Schink K.O."/>
            <person name="Boelker M."/>
        </authorList>
    </citation>
    <scope>INDUCTION</scope>
</reference>
<feature type="chain" id="PRO_0000452756" description="ABC-type transporter atr1">
    <location>
        <begin position="1"/>
        <end position="1382"/>
    </location>
</feature>
<feature type="transmembrane region" description="Helical" evidence="1 3">
    <location>
        <begin position="101"/>
        <end position="121"/>
    </location>
</feature>
<feature type="transmembrane region" description="Helical" evidence="1 3">
    <location>
        <begin position="159"/>
        <end position="179"/>
    </location>
</feature>
<feature type="transmembrane region" description="Helical" evidence="1 3">
    <location>
        <begin position="233"/>
        <end position="253"/>
    </location>
</feature>
<feature type="transmembrane region" description="Helical" evidence="1 3">
    <location>
        <begin position="259"/>
        <end position="279"/>
    </location>
</feature>
<feature type="transmembrane region" description="Helical" evidence="1 3">
    <location>
        <begin position="339"/>
        <end position="359"/>
    </location>
</feature>
<feature type="transmembrane region" description="Helical" evidence="1 3">
    <location>
        <begin position="374"/>
        <end position="394"/>
    </location>
</feature>
<feature type="transmembrane region" description="Helical" evidence="1 3">
    <location>
        <begin position="800"/>
        <end position="820"/>
    </location>
</feature>
<feature type="transmembrane region" description="Helical" evidence="1 3">
    <location>
        <begin position="848"/>
        <end position="868"/>
    </location>
</feature>
<feature type="transmembrane region" description="Helical" evidence="1 3">
    <location>
        <begin position="911"/>
        <end position="931"/>
    </location>
</feature>
<feature type="transmembrane region" description="Helical" evidence="1 3">
    <location>
        <begin position="951"/>
        <end position="973"/>
    </location>
</feature>
<feature type="transmembrane region" description="Helical" evidence="1 3">
    <location>
        <begin position="1034"/>
        <end position="1054"/>
    </location>
</feature>
<feature type="transmembrane region" description="Helical" evidence="1 3">
    <location>
        <begin position="1067"/>
        <end position="1087"/>
    </location>
</feature>
<feature type="domain" description="ABC transmembrane type-1 1" evidence="3">
    <location>
        <begin position="101"/>
        <end position="400"/>
    </location>
</feature>
<feature type="domain" description="ABC transporter 1" evidence="2">
    <location>
        <begin position="445"/>
        <end position="688"/>
    </location>
</feature>
<feature type="domain" description="ABC transmembrane type-1 2" evidence="3">
    <location>
        <begin position="797"/>
        <end position="1094"/>
    </location>
</feature>
<feature type="domain" description="ABC transporter 2" evidence="2">
    <location>
        <begin position="1136"/>
        <end position="1377"/>
    </location>
</feature>
<feature type="region of interest" description="Disordered" evidence="5">
    <location>
        <begin position="1"/>
        <end position="56"/>
    </location>
</feature>
<feature type="region of interest" description="Disordered" evidence="5">
    <location>
        <begin position="738"/>
        <end position="768"/>
    </location>
</feature>
<feature type="compositionally biased region" description="Basic and acidic residues" evidence="5">
    <location>
        <begin position="1"/>
        <end position="12"/>
    </location>
</feature>
<feature type="binding site" evidence="2">
    <location>
        <begin position="480"/>
        <end position="487"/>
    </location>
    <ligand>
        <name>ATP</name>
        <dbReference type="ChEBI" id="CHEBI:30616"/>
    </ligand>
</feature>
<feature type="binding site" evidence="2">
    <location>
        <begin position="1171"/>
        <end position="1178"/>
    </location>
    <ligand>
        <name>ATP</name>
        <dbReference type="ChEBI" id="CHEBI:30616"/>
    </ligand>
</feature>
<feature type="glycosylation site" description="N-linked (GlcNAc...) asparagine" evidence="4">
    <location>
        <position position="62"/>
    </location>
</feature>
<feature type="glycosylation site" description="N-linked (GlcNAc...) asparagine" evidence="4">
    <location>
        <position position="397"/>
    </location>
</feature>
<feature type="glycosylation site" description="N-linked (GlcNAc...) asparagine" evidence="4">
    <location>
        <position position="680"/>
    </location>
</feature>
<feature type="glycosylation site" description="N-linked (GlcNAc...) asparagine" evidence="4">
    <location>
        <position position="827"/>
    </location>
</feature>
<feature type="glycosylation site" description="N-linked (GlcNAc...) asparagine" evidence="4">
    <location>
        <position position="903"/>
    </location>
</feature>
<feature type="glycosylation site" description="N-linked (GlcNAc...) asparagine" evidence="4">
    <location>
        <position position="1020"/>
    </location>
</feature>
<feature type="glycosylation site" description="N-linked (GlcNAc...) asparagine" evidence="4">
    <location>
        <position position="1324"/>
    </location>
</feature>
<gene>
    <name evidence="8" type="primary">atr1</name>
    <name type="ORF">UMAG_06461</name>
</gene>
<accession>A0A0D1BUH6</accession>
<comment type="function">
    <text evidence="6 10">ABC-type transporter; part of the gene cluster that mediates the biosynthesis of the glycolipid biosurfactant ustilagic acid (UA) (PubMed:17850255). UA is a secreted cellobiose glycolipid that is toxic for many microorganisms and confers biocontrol activity to U.maydis (PubMed:17850255). Export of UA is presumably catalyzed by the ABC transporter atr1 (Probable). Atr1 appears to be quite unspecific, as many of the UA derivatives produced by cluster mutant strains are readily exported (Probable).</text>
</comment>
<comment type="subcellular location">
    <subcellularLocation>
        <location evidence="10">Cell membrane</location>
        <topology evidence="1">Multi-pass membrane protein</topology>
    </subcellularLocation>
</comment>
<comment type="induction">
    <text evidence="6 7">Expression is strongly induced under conditions of nitrogen starvation (PubMed:17850255). Expression is positively regulated by the cluster-specific transcription factor rua1 that recognizes and binds to the specific 5'-T/G-G/T-C-G-C-A-T-A/T-C/T-C/T-G/A-3' upstream activating sequence found in all promoters of the UA biosynthesis genes (PubMed:20173069).</text>
</comment>
<comment type="similarity">
    <text evidence="9">Belongs to the ABC transporter superfamily. ABCB family. Multidrug resistance exporter (TC 3.A.1.201) subfamily.</text>
</comment>
<protein>
    <recommendedName>
        <fullName evidence="8">ABC-type transporter atr1</fullName>
    </recommendedName>
    <alternativeName>
        <fullName evidence="8">Ustilagic acid biosynthesis cluster protein atr1</fullName>
    </alternativeName>
</protein>
<name>ATR1_MYCMD</name>
<sequence length="1382" mass="148733">MRFRSDSRADHQHPKKQGSMDPDTIQALKYQDRSSSSSSNNKPKEKVGSASTSPSPTLFASNDSVKVEIGVGSSDKEKPDVKVSFFTIFRYASKRQLLINLFGTGMAIAAGAAQPLMNIFIGKIATVFLHFTSAIRSGDLDAIRAAHSDVYSTINSDALILLYLGIGMFFASMLYMAVFSYTSERIASNIKYAYLSSLFSKPIDFFEQCGQGTVAAKIGSDVHLIQIGIGEKLPMAIMYFSTFVTAAAVAFAFSWRLSLVLLPIAPLILLAGGVMGALTKGCKLVELDCIAKAASRAEEAFNAIKILKAFSKERTIGQEYDTLTTDTKAAGAKAGRIQGVGVGALLFIIYAGYALAFFYGAQLIARGELLPGRIVSVVFANFAGAFAIANLFSMIENFTMATAAASSVIGTIQQDLASSELSESRRNEEKSQTSRQLATGYNAELKLDHVHFAYPSKPERPVLKDLSLTIPSCVTTAIVGLSGSGKSTIFALLQRFYAPTRGSIRLDDVDISALDVDWLRGQIGVVEQQPTLFAMSIQANIELGLPNRHTRSAEELESLVVQAAKKANAHNFITALTHGYQTEVGSQGFLLSGGQKQRIAIARALIRDPKILLLDEATSALDSKSEAVVQAALDEAAKDRTTIIISHRLSTVRNADNIVVLGPDGIIEQGSHHELSIKPNGTFASMLRHQDDKTKPVMVTSEPEIVDSSHSLCLTEIPTMEIAHSLEVSRTISALADSVKPKDPSKNFEPPGESYASPAADGVKQDAPKTDSVGLRTLLHILIKDPETGRLAQLYMLGSLCAAIIGAVYPVYAILFGTAIEDYAPCNSSDGRPCPNPARGTMLHNNRISSGSFFIVAVGCAFISFYHVRSLYIAGSRVTHRLRVLVFQSLLCLDASFFDDPVNTSNDLASSLSVLSQGIYGGVGPTLGSIVQSLATVIVGYAVAIGYGWRLALVVIASTPLTITAGLLRLRVLARKESKTKQAHQHTTQQACESIGAIRTVSAFNLQPQTLQVYQKNLENASRSLRPTMCYSSVLFGLSQCVQLLVTALAFWYGGRELAQGHTSSKGFFTILISVVYGSVQAGNIFNYSADFSSAHSAACKSLSILKQAKEVVAEAQANDRDVQWNTEDSLPSGQIALKEVTFRYPQRPTCTVLDRLSLTIEPGTFCAIVGGSGSGKSTVLQLIERFYTPESGRVLLDGYSITEGDPARFRKYMSYVPQEPTLFQGTIGWNIALGATDENPEDVPLAKIQQAAELAQLGDLLASLPEGLNTQLSARGVQMSGGQKQRIAIARAMIRDPRVLLLDEATSALDPASERAVQGALDNVSQGRTTIAVAHRLSTIAKADKVIVMQAGKVVEEGSPRELFQRDGLFALMARLQGVSF</sequence>